<sequence length="1393" mass="156729">MEDKNNIELQEKAPDNYNNNNNNNNNNNNNNNNNNNNNNNNNNNNNNDINNNDDDNNKIIYQNPTPASSSHIDSIEIDINYDLSNHIKQRVTQNKTGMFVSANNISYYIPKSIKKGESEELSKLYLLNNISFTMKPGRMILLMGIPGAGKSLLLKVLGNRLGKGKIEGELKFNNHEVDETTHQRDTIFVSQDDRHIALLTVRETLEFSAKCNMGENVSQEEQSERVDLVLDQLGLSHTSNTIIGNQFFRGISGGQKRRVTIANEFTKRSPNLILMDEPSTGLDSATSYNVISKVKTIAKEAKASVMVSLLQPSVELTNLFDDILILGEGGNLIYFGELNNLLPYFSSIGLAPLPNQPLAEFMQEVSVEPSKYMITDKIELSSKDGGDDESKSLLLGGADSGNVEKMDLVKLFKESELNQKTIQSMQQLIPSDIKVSDHLIKKLETGDNGKSSVRYELKHLLARHIKVMKIMKMQYAVRFFQAIFMGCVIGSLFVKMGFTQADARNRFGLVYFAMVLHIWTTIGSVEEFFTLRGIFDDQKDSKYYRNFPYFLSLVITKIPISLIEAILFSSCCYWIAGFQARVDNFIVFILGMALTNLIAQGIFQVTSAFTSAQLLASLICPAIVVLFMIMSGYMISRLQIPGWWIWLNALSPLRYVIDMVSSNELYGLEFHCSPMEKIPPSNYPLLNVSYADGGYQGNQICQYSTGSDFLNQFGFSDNSYMRWVDIVIILGFVCTFFFIFFLGVKYIRFENKKPPRQIKLKKKKEKKDKKDKEVKHKWNGCYMTFQNLNYVVPSVKDNKETGKKEKVTLELLKDVNGFIVPGMCALMGPSGAGKSTLMDVLAKRKNVGTITGDIRINGQLVKDMNITRFTGYVEQQDILSANLTVREAIEFSANCRLPSSYLQKDRVKLIDEILSVLSLTKMQNTTIGPNPTLGISLANRKKVSIGIELASDPHLIFLDEPTSGLDSSAALKVMNCVKKIAESGRTVVCTIHQPSQEIFEKFDQLLLLDKGKVIYFGDTGDNSSTVIQHFTSAGYQYEHGRNPADFILEIAEHPPSTGQSASDYFKSSIHYSNSIQRLESKTIVPEGVDVPKYKGKYSAPATAQLHSLVKRGWLNHVRRPQTILLRFLRSFIPAIVIGTLFLRLDNDQTGARNRIALVFLGFLFGGMASIGKVPTIVEDRSVYYRESSAGTYPAHLYILASVITDLPMMVLTAFSYWIPMFFLTGLTLGDHGWKFFFSLSVYLLVIMCYDSLATLFALTLPTIPIAILVSGVGLNFLGLFGGFFIPVNNIPRGWIWMHYLVFSKYGLETLSITELKGEPFFCEEDQYSIIPIAGTNFTKKYCAIQSGDTMLLQYGMNDAYDRQFYNLIILGGYFCAYTFLGYLALRFINHMKR</sequence>
<proteinExistence type="inferred from homology"/>
<keyword id="KW-0067">ATP-binding</keyword>
<keyword id="KW-0472">Membrane</keyword>
<keyword id="KW-0547">Nucleotide-binding</keyword>
<keyword id="KW-1185">Reference proteome</keyword>
<keyword id="KW-0677">Repeat</keyword>
<keyword id="KW-0812">Transmembrane</keyword>
<keyword id="KW-1133">Transmembrane helix</keyword>
<keyword id="KW-0813">Transport</keyword>
<reference key="1">
    <citation type="journal article" date="2002" name="Eukaryot. Cell">
        <title>Evolutionary analyses of ABC transporters of Dictyostelium discoideum.</title>
        <authorList>
            <person name="Anjard C."/>
            <person name="Loomis W.F."/>
        </authorList>
    </citation>
    <scope>NUCLEOTIDE SEQUENCE [GENOMIC DNA]</scope>
    <scope>NOMENCLATURE</scope>
    <source>
        <strain>AX4</strain>
    </source>
</reference>
<reference key="2">
    <citation type="journal article" date="2005" name="Nature">
        <title>The genome of the social amoeba Dictyostelium discoideum.</title>
        <authorList>
            <person name="Eichinger L."/>
            <person name="Pachebat J.A."/>
            <person name="Gloeckner G."/>
            <person name="Rajandream M.A."/>
            <person name="Sucgang R."/>
            <person name="Berriman M."/>
            <person name="Song J."/>
            <person name="Olsen R."/>
            <person name="Szafranski K."/>
            <person name="Xu Q."/>
            <person name="Tunggal B."/>
            <person name="Kummerfeld S."/>
            <person name="Madera M."/>
            <person name="Konfortov B.A."/>
            <person name="Rivero F."/>
            <person name="Bankier A.T."/>
            <person name="Lehmann R."/>
            <person name="Hamlin N."/>
            <person name="Davies R."/>
            <person name="Gaudet P."/>
            <person name="Fey P."/>
            <person name="Pilcher K."/>
            <person name="Chen G."/>
            <person name="Saunders D."/>
            <person name="Sodergren E.J."/>
            <person name="Davis P."/>
            <person name="Kerhornou A."/>
            <person name="Nie X."/>
            <person name="Hall N."/>
            <person name="Anjard C."/>
            <person name="Hemphill L."/>
            <person name="Bason N."/>
            <person name="Farbrother P."/>
            <person name="Desany B."/>
            <person name="Just E."/>
            <person name="Morio T."/>
            <person name="Rost R."/>
            <person name="Churcher C.M."/>
            <person name="Cooper J."/>
            <person name="Haydock S."/>
            <person name="van Driessche N."/>
            <person name="Cronin A."/>
            <person name="Goodhead I."/>
            <person name="Muzny D.M."/>
            <person name="Mourier T."/>
            <person name="Pain A."/>
            <person name="Lu M."/>
            <person name="Harper D."/>
            <person name="Lindsay R."/>
            <person name="Hauser H."/>
            <person name="James K.D."/>
            <person name="Quiles M."/>
            <person name="Madan Babu M."/>
            <person name="Saito T."/>
            <person name="Buchrieser C."/>
            <person name="Wardroper A."/>
            <person name="Felder M."/>
            <person name="Thangavelu M."/>
            <person name="Johnson D."/>
            <person name="Knights A."/>
            <person name="Loulseged H."/>
            <person name="Mungall K.L."/>
            <person name="Oliver K."/>
            <person name="Price C."/>
            <person name="Quail M.A."/>
            <person name="Urushihara H."/>
            <person name="Hernandez J."/>
            <person name="Rabbinowitsch E."/>
            <person name="Steffen D."/>
            <person name="Sanders M."/>
            <person name="Ma J."/>
            <person name="Kohara Y."/>
            <person name="Sharp S."/>
            <person name="Simmonds M.N."/>
            <person name="Spiegler S."/>
            <person name="Tivey A."/>
            <person name="Sugano S."/>
            <person name="White B."/>
            <person name="Walker D."/>
            <person name="Woodward J.R."/>
            <person name="Winckler T."/>
            <person name="Tanaka Y."/>
            <person name="Shaulsky G."/>
            <person name="Schleicher M."/>
            <person name="Weinstock G.M."/>
            <person name="Rosenthal A."/>
            <person name="Cox E.C."/>
            <person name="Chisholm R.L."/>
            <person name="Gibbs R.A."/>
            <person name="Loomis W.F."/>
            <person name="Platzer M."/>
            <person name="Kay R.R."/>
            <person name="Williams J.G."/>
            <person name="Dear P.H."/>
            <person name="Noegel A.A."/>
            <person name="Barrell B.G."/>
            <person name="Kuspa A."/>
        </authorList>
    </citation>
    <scope>NUCLEOTIDE SEQUENCE [LARGE SCALE GENOMIC DNA]</scope>
    <source>
        <strain>AX4</strain>
    </source>
</reference>
<feature type="chain" id="PRO_0000391392" description="ABC transporter G family member 3">
    <location>
        <begin position="1"/>
        <end position="1393"/>
    </location>
</feature>
<feature type="transmembrane region" description="Helical" evidence="1">
    <location>
        <begin position="479"/>
        <end position="499"/>
    </location>
</feature>
<feature type="transmembrane region" description="Helical" evidence="1">
    <location>
        <begin position="509"/>
        <end position="529"/>
    </location>
</feature>
<feature type="transmembrane region" description="Helical" evidence="1">
    <location>
        <begin position="558"/>
        <end position="578"/>
    </location>
</feature>
<feature type="transmembrane region" description="Helical" evidence="1">
    <location>
        <begin position="585"/>
        <end position="605"/>
    </location>
</feature>
<feature type="transmembrane region" description="Helical" evidence="1">
    <location>
        <begin position="615"/>
        <end position="635"/>
    </location>
</feature>
<feature type="transmembrane region" description="Helical" evidence="1">
    <location>
        <begin position="640"/>
        <end position="660"/>
    </location>
</feature>
<feature type="transmembrane region" description="Helical" evidence="1">
    <location>
        <begin position="724"/>
        <end position="744"/>
    </location>
</feature>
<feature type="transmembrane region" description="Helical" evidence="1">
    <location>
        <begin position="1122"/>
        <end position="1142"/>
    </location>
</feature>
<feature type="transmembrane region" description="Helical" evidence="1">
    <location>
        <begin position="1157"/>
        <end position="1177"/>
    </location>
</feature>
<feature type="transmembrane region" description="Helical" evidence="1">
    <location>
        <begin position="1206"/>
        <end position="1226"/>
    </location>
</feature>
<feature type="transmembrane region" description="Helical" evidence="1">
    <location>
        <begin position="1235"/>
        <end position="1255"/>
    </location>
</feature>
<feature type="transmembrane region" description="Helical" evidence="1">
    <location>
        <begin position="1265"/>
        <end position="1285"/>
    </location>
</feature>
<feature type="transmembrane region" description="Helical" evidence="1">
    <location>
        <begin position="1364"/>
        <end position="1384"/>
    </location>
</feature>
<feature type="domain" description="ABC transporter 1" evidence="2">
    <location>
        <begin position="100"/>
        <end position="353"/>
    </location>
</feature>
<feature type="domain" description="ABC transmembrane type-2 1">
    <location>
        <begin position="473"/>
        <end position="698"/>
    </location>
</feature>
<feature type="domain" description="ABC transporter 2" evidence="2">
    <location>
        <begin position="783"/>
        <end position="1035"/>
    </location>
</feature>
<feature type="domain" description="ABC transmembrane type-2 2">
    <location>
        <begin position="1121"/>
        <end position="1388"/>
    </location>
</feature>
<feature type="region of interest" description="Disordered" evidence="3">
    <location>
        <begin position="1"/>
        <end position="68"/>
    </location>
</feature>
<feature type="compositionally biased region" description="Basic and acidic residues" evidence="3">
    <location>
        <begin position="1"/>
        <end position="14"/>
    </location>
</feature>
<feature type="compositionally biased region" description="Low complexity" evidence="3">
    <location>
        <begin position="15"/>
        <end position="50"/>
    </location>
</feature>
<feature type="binding site" evidence="2">
    <location>
        <begin position="144"/>
        <end position="151"/>
    </location>
    <ligand>
        <name>ATP</name>
        <dbReference type="ChEBI" id="CHEBI:30616"/>
    </ligand>
</feature>
<feature type="binding site" evidence="2">
    <location>
        <begin position="828"/>
        <end position="835"/>
    </location>
    <ligand>
        <name>ATP</name>
        <dbReference type="ChEBI" id="CHEBI:30616"/>
    </ligand>
</feature>
<gene>
    <name type="primary">abcG3</name>
    <name type="ORF">DDB_G0287461</name>
</gene>
<evidence type="ECO:0000255" key="1"/>
<evidence type="ECO:0000255" key="2">
    <source>
        <dbReference type="PROSITE-ProRule" id="PRU00434"/>
    </source>
</evidence>
<evidence type="ECO:0000256" key="3">
    <source>
        <dbReference type="SAM" id="MobiDB-lite"/>
    </source>
</evidence>
<evidence type="ECO:0000305" key="4"/>
<comment type="subcellular location">
    <subcellularLocation>
        <location evidence="4">Membrane</location>
        <topology evidence="4">Multi-pass membrane protein</topology>
    </subcellularLocation>
</comment>
<comment type="similarity">
    <text evidence="4">Belongs to the ABC transporter superfamily. ABCG family. PDR (TC 3.A.1.205) subfamily.</text>
</comment>
<protein>
    <recommendedName>
        <fullName>ABC transporter G family member 3</fullName>
    </recommendedName>
    <alternativeName>
        <fullName>ABC transporter ABCG.3</fullName>
    </alternativeName>
</protein>
<organism>
    <name type="scientific">Dictyostelium discoideum</name>
    <name type="common">Social amoeba</name>
    <dbReference type="NCBI Taxonomy" id="44689"/>
    <lineage>
        <taxon>Eukaryota</taxon>
        <taxon>Amoebozoa</taxon>
        <taxon>Evosea</taxon>
        <taxon>Eumycetozoa</taxon>
        <taxon>Dictyostelia</taxon>
        <taxon>Dictyosteliales</taxon>
        <taxon>Dictyosteliaceae</taxon>
        <taxon>Dictyostelium</taxon>
    </lineage>
</organism>
<accession>Q8T690</accession>
<accession>Q54KC2</accession>
<dbReference type="EMBL" id="AF482382">
    <property type="protein sequence ID" value="AAL91488.1"/>
    <property type="molecule type" value="Genomic_DNA"/>
</dbReference>
<dbReference type="EMBL" id="AAFI02000101">
    <property type="protein sequence ID" value="EAL63696.1"/>
    <property type="molecule type" value="Genomic_DNA"/>
</dbReference>
<dbReference type="RefSeq" id="XP_637199.1">
    <property type="nucleotide sequence ID" value="XM_632107.1"/>
</dbReference>
<dbReference type="SMR" id="Q8T690"/>
<dbReference type="FunCoup" id="Q8T690">
    <property type="interactions" value="5"/>
</dbReference>
<dbReference type="STRING" id="44689.Q8T690"/>
<dbReference type="GlyGen" id="Q8T690">
    <property type="glycosylation" value="1 site"/>
</dbReference>
<dbReference type="PaxDb" id="44689-DDB0191230"/>
<dbReference type="EnsemblProtists" id="EAL63696">
    <property type="protein sequence ID" value="EAL63696"/>
    <property type="gene ID" value="DDB_G0287461"/>
</dbReference>
<dbReference type="GeneID" id="8626136"/>
<dbReference type="KEGG" id="ddi:DDB_G0287461"/>
<dbReference type="dictyBase" id="DDB_G0287461">
    <property type="gene designation" value="abcG3"/>
</dbReference>
<dbReference type="VEuPathDB" id="AmoebaDB:DDB_G0287461"/>
<dbReference type="eggNOG" id="KOG0065">
    <property type="taxonomic scope" value="Eukaryota"/>
</dbReference>
<dbReference type="HOGENOM" id="CLU_000604_35_6_1"/>
<dbReference type="InParanoid" id="Q8T690"/>
<dbReference type="OMA" id="ACGYFVQ"/>
<dbReference type="PhylomeDB" id="Q8T690"/>
<dbReference type="PRO" id="PR:Q8T690"/>
<dbReference type="Proteomes" id="UP000002195">
    <property type="component" value="Chromosome 5"/>
</dbReference>
<dbReference type="GO" id="GO:0016020">
    <property type="term" value="C:membrane"/>
    <property type="evidence" value="ECO:0007669"/>
    <property type="project" value="UniProtKB-SubCell"/>
</dbReference>
<dbReference type="GO" id="GO:0140359">
    <property type="term" value="F:ABC-type transporter activity"/>
    <property type="evidence" value="ECO:0007669"/>
    <property type="project" value="InterPro"/>
</dbReference>
<dbReference type="GO" id="GO:0005524">
    <property type="term" value="F:ATP binding"/>
    <property type="evidence" value="ECO:0007669"/>
    <property type="project" value="UniProtKB-KW"/>
</dbReference>
<dbReference type="GO" id="GO:0016887">
    <property type="term" value="F:ATP hydrolysis activity"/>
    <property type="evidence" value="ECO:0007669"/>
    <property type="project" value="InterPro"/>
</dbReference>
<dbReference type="GO" id="GO:0042626">
    <property type="term" value="F:ATPase-coupled transmembrane transporter activity"/>
    <property type="evidence" value="ECO:0000317"/>
    <property type="project" value="dictyBase"/>
</dbReference>
<dbReference type="GO" id="GO:0031152">
    <property type="term" value="P:aggregation involved in sorocarp development"/>
    <property type="evidence" value="ECO:0000318"/>
    <property type="project" value="GO_Central"/>
</dbReference>
<dbReference type="GO" id="GO:0031288">
    <property type="term" value="P:sorocarp morphogenesis"/>
    <property type="evidence" value="ECO:0000318"/>
    <property type="project" value="GO_Central"/>
</dbReference>
<dbReference type="CDD" id="cd03233">
    <property type="entry name" value="ABCG_PDR_domain1"/>
    <property type="match status" value="1"/>
</dbReference>
<dbReference type="CDD" id="cd03232">
    <property type="entry name" value="ABCG_PDR_domain2"/>
    <property type="match status" value="1"/>
</dbReference>
<dbReference type="Gene3D" id="3.40.50.300">
    <property type="entry name" value="P-loop containing nucleotide triphosphate hydrolases"/>
    <property type="match status" value="2"/>
</dbReference>
<dbReference type="InterPro" id="IPR003593">
    <property type="entry name" value="AAA+_ATPase"/>
</dbReference>
<dbReference type="InterPro" id="IPR013525">
    <property type="entry name" value="ABC2_TM"/>
</dbReference>
<dbReference type="InterPro" id="IPR003439">
    <property type="entry name" value="ABC_transporter-like_ATP-bd"/>
</dbReference>
<dbReference type="InterPro" id="IPR017871">
    <property type="entry name" value="ABC_transporter-like_CS"/>
</dbReference>
<dbReference type="InterPro" id="IPR034001">
    <property type="entry name" value="ABCG_PDR_1"/>
</dbReference>
<dbReference type="InterPro" id="IPR034003">
    <property type="entry name" value="ABCG_PDR_2"/>
</dbReference>
<dbReference type="InterPro" id="IPR027417">
    <property type="entry name" value="P-loop_NTPase"/>
</dbReference>
<dbReference type="PANTHER" id="PTHR19241">
    <property type="entry name" value="ATP-BINDING CASSETTE TRANSPORTER"/>
    <property type="match status" value="1"/>
</dbReference>
<dbReference type="Pfam" id="PF01061">
    <property type="entry name" value="ABC2_membrane"/>
    <property type="match status" value="2"/>
</dbReference>
<dbReference type="Pfam" id="PF00005">
    <property type="entry name" value="ABC_tran"/>
    <property type="match status" value="2"/>
</dbReference>
<dbReference type="SMART" id="SM00382">
    <property type="entry name" value="AAA"/>
    <property type="match status" value="2"/>
</dbReference>
<dbReference type="SUPFAM" id="SSF52540">
    <property type="entry name" value="P-loop containing nucleoside triphosphate hydrolases"/>
    <property type="match status" value="2"/>
</dbReference>
<dbReference type="PROSITE" id="PS00211">
    <property type="entry name" value="ABC_TRANSPORTER_1"/>
    <property type="match status" value="1"/>
</dbReference>
<dbReference type="PROSITE" id="PS50893">
    <property type="entry name" value="ABC_TRANSPORTER_2"/>
    <property type="match status" value="2"/>
</dbReference>
<name>ABCG3_DICDI</name>